<organismHost>
    <name type="scientific">Mus musculus</name>
    <name type="common">Mouse</name>
    <dbReference type="NCBI Taxonomy" id="10090"/>
</organismHost>
<name>CAPSD_MUMIM</name>
<reference key="1">
    <citation type="journal article" date="1986" name="J. Virol.">
        <title>DNA sequence of the lymphotropic variant of minute virus of mice, MVM(i), and comparison with the DNA sequence of the fibrotropic prototype strain.</title>
        <authorList>
            <person name="Astell C.R."/>
            <person name="Gardiner E.M."/>
            <person name="Tattersall P."/>
        </authorList>
    </citation>
    <scope>NUCLEOTIDE SEQUENCE [GENOMIC DNA]</scope>
</reference>
<reference key="2">
    <citation type="journal article" date="1985" name="Nucleic Acids Res.">
        <title>DNA sequence comparison between two tissue-specific variants of the autonomous parvovirus, minute virus of mice.</title>
        <authorList>
            <person name="Sahli R."/>
            <person name="McMaster G.K."/>
            <person name="Hirt B."/>
        </authorList>
    </citation>
    <scope>NUCLEOTIDE SEQUENCE [GENOMIC DNA]</scope>
</reference>
<reference key="3">
    <citation type="journal article" date="1997" name="Acta Crystallogr. D">
        <title>Structure determination of Minute virus of mice.</title>
        <authorList>
            <person name="Llamas-Saiz A.L."/>
            <person name="Agbandje-Mckenna M."/>
            <person name="Wikoff W.R."/>
            <person name="Bratton J."/>
            <person name="Tattersall P."/>
            <person name="Rossmann M.G."/>
        </authorList>
    </citation>
    <scope>X-RAY CRYSTALLOGRAPHY (3.5 ANGSTROMS) OF 132-718</scope>
</reference>
<evidence type="ECO:0000250" key="1"/>
<evidence type="ECO:0000255" key="2"/>
<evidence type="ECO:0000256" key="3">
    <source>
        <dbReference type="SAM" id="MobiDB-lite"/>
    </source>
</evidence>
<evidence type="ECO:0000305" key="4"/>
<evidence type="ECO:0007829" key="5">
    <source>
        <dbReference type="PDB" id="1MVM"/>
    </source>
</evidence>
<evidence type="ECO:0007829" key="6">
    <source>
        <dbReference type="PDB" id="1Z1C"/>
    </source>
</evidence>
<sequence>MAPPAKRAKRGWVPPGYKYLGPGNSLDQGEPTNPSDAAAKEHDEAYDQYIKSGKNPYLYFSAADQRFIDQTKDAKDWGGKVGHYFFRTKRAFAPKLATDSEPGTSGVSRAGKRTRPPAYIFINQARAKKKLTSSAAQQSSQTMSDGTSQPDGGNAVHSAARVERAADGPGGSGGGGSGGGGVGVSTGSYDNQTHYRFLGDGWVEITALATRLVHLNMPKSENYCRIRVHNTTDTSVKGNMAKDDAHEQIWTPWSLVDANAWGVWLQPSDWQYICNTMSQLNLVSLDQEIFNVVLKTVTEQDSGGQAIKIYNNDLTACMMVAVDSNNILPYTPAANSMETLGFYPWKPTIASPYRYYFCVDRDLSVTYENQEGTIEHNVMGTPKGMNSQFFTIENTQQITLLRTGDEFATGTYYFDTNPVKLTHTWQTNRQLGQPPLLSTFPEADTDAGTLTAQGSRHGATQMEVNWVSEAIRTRPAQVGFCQPHNDFEASRAGPFAAPKVPADVTQGVDREANGSVRYSYGKQHGENWAAHGPAPERYTWDETNFGSGRDTRDGFIQSAPLVVPPPLNGILTNANPIGTKNDIHFSNVFNSYGPLTAFSHPSPVYPQGQIWDKELDLEHKPRLHITAPFVCKNNAPGQMLVRLGPNLTDQYDPNGATLSRIVTYGTFFWKGKLTMRAKLRANTTWNPVYQVSVEDNGNSYMSVTKWLPTATGNMQSVPLITRPVARNTY</sequence>
<proteinExistence type="evidence at protein level"/>
<feature type="chain" id="PRO_0000039417" description="Capsid protein VP1">
    <location>
        <begin position="1"/>
        <end position="729"/>
    </location>
</feature>
<feature type="region of interest" description="Disordered" evidence="3">
    <location>
        <begin position="1"/>
        <end position="39"/>
    </location>
</feature>
<feature type="region of interest" description="Phospholipase A2-like" evidence="1">
    <location>
        <begin position="19"/>
        <end position="64"/>
    </location>
</feature>
<feature type="region of interest" description="Disordered" evidence="3">
    <location>
        <begin position="96"/>
        <end position="115"/>
    </location>
</feature>
<feature type="region of interest" description="Disordered" evidence="3">
    <location>
        <begin position="130"/>
        <end position="185"/>
    </location>
</feature>
<feature type="short sequence motif" description="Nuclear localization signal" evidence="2">
    <location>
        <begin position="4"/>
        <end position="13"/>
    </location>
</feature>
<feature type="compositionally biased region" description="Basic residues" evidence="3">
    <location>
        <begin position="1"/>
        <end position="10"/>
    </location>
</feature>
<feature type="compositionally biased region" description="Polar residues" evidence="3">
    <location>
        <begin position="25"/>
        <end position="35"/>
    </location>
</feature>
<feature type="compositionally biased region" description="Low complexity" evidence="3">
    <location>
        <begin position="132"/>
        <end position="142"/>
    </location>
</feature>
<feature type="compositionally biased region" description="Gly residues" evidence="3">
    <location>
        <begin position="168"/>
        <end position="184"/>
    </location>
</feature>
<feature type="binding site" evidence="1">
    <location>
        <position position="325"/>
    </location>
    <ligand>
        <name>Mg(2+)</name>
        <dbReference type="ChEBI" id="CHEBI:18420"/>
        <label>1</label>
    </ligand>
</feature>
<feature type="splice variant" id="VSP_041134" description="In isoform VP2." evidence="4">
    <location>
        <begin position="1"/>
        <end position="142"/>
    </location>
</feature>
<feature type="sequence conflict" description="In Ref. 2; CAB46507/CAB46508." evidence="4" ref="2">
    <original>A</original>
    <variation>G</variation>
    <location>
        <position position="155"/>
    </location>
</feature>
<feature type="strand" evidence="5">
    <location>
        <begin position="193"/>
        <end position="197"/>
    </location>
</feature>
<feature type="strand" evidence="5">
    <location>
        <begin position="199"/>
        <end position="215"/>
    </location>
</feature>
<feature type="strand" evidence="6">
    <location>
        <begin position="219"/>
        <end position="222"/>
    </location>
</feature>
<feature type="strand" evidence="5">
    <location>
        <begin position="224"/>
        <end position="228"/>
    </location>
</feature>
<feature type="strand" evidence="5">
    <location>
        <begin position="233"/>
        <end position="238"/>
    </location>
</feature>
<feature type="strand" evidence="5">
    <location>
        <begin position="246"/>
        <end position="256"/>
    </location>
</feature>
<feature type="turn" evidence="5">
    <location>
        <begin position="262"/>
        <end position="264"/>
    </location>
</feature>
<feature type="helix" evidence="5">
    <location>
        <begin position="267"/>
        <end position="276"/>
    </location>
</feature>
<feature type="strand" evidence="5">
    <location>
        <begin position="277"/>
        <end position="280"/>
    </location>
</feature>
<feature type="strand" evidence="5">
    <location>
        <begin position="285"/>
        <end position="300"/>
    </location>
</feature>
<feature type="strand" evidence="5">
    <location>
        <begin position="302"/>
        <end position="305"/>
    </location>
</feature>
<feature type="strand" evidence="5">
    <location>
        <begin position="307"/>
        <end position="312"/>
    </location>
</feature>
<feature type="strand" evidence="5">
    <location>
        <begin position="320"/>
        <end position="323"/>
    </location>
</feature>
<feature type="helix" evidence="5">
    <location>
        <begin position="333"/>
        <end position="336"/>
    </location>
</feature>
<feature type="strand" evidence="5">
    <location>
        <begin position="351"/>
        <end position="356"/>
    </location>
</feature>
<feature type="helix" evidence="6">
    <location>
        <begin position="384"/>
        <end position="386"/>
    </location>
</feature>
<feature type="helix" evidence="5">
    <location>
        <begin position="392"/>
        <end position="395"/>
    </location>
</feature>
<feature type="strand" evidence="6">
    <location>
        <begin position="399"/>
        <end position="401"/>
    </location>
</feature>
<feature type="strand" evidence="6">
    <location>
        <begin position="406"/>
        <end position="408"/>
    </location>
</feature>
<feature type="strand" evidence="5">
    <location>
        <begin position="428"/>
        <end position="432"/>
    </location>
</feature>
<feature type="strand" evidence="5">
    <location>
        <begin position="442"/>
        <end position="445"/>
    </location>
</feature>
<feature type="helix" evidence="5">
    <location>
        <begin position="453"/>
        <end position="455"/>
    </location>
</feature>
<feature type="strand" evidence="5">
    <location>
        <begin position="461"/>
        <end position="466"/>
    </location>
</feature>
<feature type="turn" evidence="5">
    <location>
        <begin position="469"/>
        <end position="471"/>
    </location>
</feature>
<feature type="strand" evidence="5">
    <location>
        <begin position="475"/>
        <end position="479"/>
    </location>
</feature>
<feature type="strand" evidence="5">
    <location>
        <begin position="490"/>
        <end position="492"/>
    </location>
</feature>
<feature type="strand" evidence="6">
    <location>
        <begin position="493"/>
        <end position="496"/>
    </location>
</feature>
<feature type="turn" evidence="5">
    <location>
        <begin position="505"/>
        <end position="507"/>
    </location>
</feature>
<feature type="turn" evidence="5">
    <location>
        <begin position="510"/>
        <end position="514"/>
    </location>
</feature>
<feature type="strand" evidence="6">
    <location>
        <begin position="516"/>
        <end position="518"/>
    </location>
</feature>
<feature type="strand" evidence="6">
    <location>
        <begin position="538"/>
        <end position="540"/>
    </location>
</feature>
<feature type="helix" evidence="5">
    <location>
        <begin position="545"/>
        <end position="547"/>
    </location>
</feature>
<feature type="strand" evidence="5">
    <location>
        <begin position="551"/>
        <end position="553"/>
    </location>
</feature>
<feature type="strand" evidence="5">
    <location>
        <begin position="573"/>
        <end position="575"/>
    </location>
</feature>
<feature type="strand" evidence="5">
    <location>
        <begin position="577"/>
        <end position="579"/>
    </location>
</feature>
<feature type="turn" evidence="5">
    <location>
        <begin position="586"/>
        <end position="588"/>
    </location>
</feature>
<feature type="strand" evidence="5">
    <location>
        <begin position="605"/>
        <end position="607"/>
    </location>
</feature>
<feature type="strand" evidence="6">
    <location>
        <begin position="628"/>
        <end position="630"/>
    </location>
</feature>
<feature type="strand" evidence="5">
    <location>
        <begin position="638"/>
        <end position="641"/>
    </location>
</feature>
<feature type="strand" evidence="6">
    <location>
        <begin position="653"/>
        <end position="657"/>
    </location>
</feature>
<feature type="strand" evidence="5">
    <location>
        <begin position="663"/>
        <end position="679"/>
    </location>
</feature>
<feature type="strand" evidence="5">
    <location>
        <begin position="694"/>
        <end position="702"/>
    </location>
</feature>
<feature type="helix" evidence="5">
    <location>
        <begin position="703"/>
        <end position="705"/>
    </location>
</feature>
<accession>P07302</accession>
<accession>Q9WMH2</accession>
<accession>Q9WMH3</accession>
<dbReference type="EMBL" id="X02481">
    <property type="protein sequence ID" value="CAB46507.1"/>
    <property type="status" value="ALT_SEQ"/>
    <property type="molecule type" value="Genomic_DNA"/>
</dbReference>
<dbReference type="EMBL" id="X02481">
    <property type="protein sequence ID" value="CAB46508.1"/>
    <property type="status" value="ALT_INIT"/>
    <property type="molecule type" value="Genomic_DNA"/>
</dbReference>
<dbReference type="EMBL" id="M12032">
    <property type="protein sequence ID" value="AAA69569.1"/>
    <property type="status" value="ALT_SEQ"/>
    <property type="molecule type" value="Genomic_DNA"/>
</dbReference>
<dbReference type="PIR" id="B23008">
    <property type="entry name" value="VCPVIM"/>
</dbReference>
<dbReference type="PDB" id="1MVM">
    <property type="method" value="X-ray"/>
    <property type="resolution" value="3.50 A"/>
    <property type="chains" value="A=143-729"/>
</dbReference>
<dbReference type="PDB" id="1Z1C">
    <property type="method" value="X-ray"/>
    <property type="resolution" value="3.50 A"/>
    <property type="chains" value="A=143-729"/>
</dbReference>
<dbReference type="PDB" id="2XGK">
    <property type="method" value="X-ray"/>
    <property type="resolution" value="4.20 A"/>
    <property type="chains" value="A=143-729"/>
</dbReference>
<dbReference type="PDBsum" id="1MVM"/>
<dbReference type="PDBsum" id="1Z1C"/>
<dbReference type="PDBsum" id="2XGK"/>
<dbReference type="SMR" id="P07302"/>
<dbReference type="EvolutionaryTrace" id="P07302"/>
<dbReference type="Proteomes" id="UP000007783">
    <property type="component" value="Genome"/>
</dbReference>
<dbReference type="Proteomes" id="UP000104537">
    <property type="component" value="Genome"/>
</dbReference>
<dbReference type="GO" id="GO:0043657">
    <property type="term" value="C:host cell"/>
    <property type="evidence" value="ECO:0007669"/>
    <property type="project" value="GOC"/>
</dbReference>
<dbReference type="GO" id="GO:0042025">
    <property type="term" value="C:host cell nucleus"/>
    <property type="evidence" value="ECO:0007669"/>
    <property type="project" value="UniProtKB-SubCell"/>
</dbReference>
<dbReference type="GO" id="GO:0039615">
    <property type="term" value="C:T=1 icosahedral viral capsid"/>
    <property type="evidence" value="ECO:0007669"/>
    <property type="project" value="UniProtKB-KW"/>
</dbReference>
<dbReference type="GO" id="GO:0046872">
    <property type="term" value="F:metal ion binding"/>
    <property type="evidence" value="ECO:0007669"/>
    <property type="project" value="UniProtKB-KW"/>
</dbReference>
<dbReference type="GO" id="GO:0005198">
    <property type="term" value="F:structural molecule activity"/>
    <property type="evidence" value="ECO:0007669"/>
    <property type="project" value="InterPro"/>
</dbReference>
<dbReference type="GO" id="GO:0075512">
    <property type="term" value="P:clathrin-dependent endocytosis of virus by host cell"/>
    <property type="evidence" value="ECO:0007669"/>
    <property type="project" value="UniProtKB-KW"/>
</dbReference>
<dbReference type="GO" id="GO:0075521">
    <property type="term" value="P:microtubule-dependent intracellular transport of viral material towards nucleus"/>
    <property type="evidence" value="ECO:0007669"/>
    <property type="project" value="UniProtKB-KW"/>
</dbReference>
<dbReference type="GO" id="GO:0140267">
    <property type="term" value="P:symbiont entry into host cell via permeabilization of host membrane"/>
    <property type="evidence" value="ECO:0007669"/>
    <property type="project" value="UniProtKB-KW"/>
</dbReference>
<dbReference type="GO" id="GO:0075732">
    <property type="term" value="P:viral penetration into host nucleus"/>
    <property type="evidence" value="ECO:0007669"/>
    <property type="project" value="UniProtKB-KW"/>
</dbReference>
<dbReference type="GO" id="GO:0019062">
    <property type="term" value="P:virion attachment to host cell"/>
    <property type="evidence" value="ECO:0007669"/>
    <property type="project" value="UniProtKB-KW"/>
</dbReference>
<dbReference type="Gene3D" id="2.170.30.10">
    <property type="entry name" value="Parvovirus coat protein VP1/VP2"/>
    <property type="match status" value="1"/>
</dbReference>
<dbReference type="InterPro" id="IPR016184">
    <property type="entry name" value="Capsid/spike_ssDNA_virus"/>
</dbReference>
<dbReference type="InterPro" id="IPR001403">
    <property type="entry name" value="Parvovirus_coat"/>
</dbReference>
<dbReference type="InterPro" id="IPR013607">
    <property type="entry name" value="Phospholipase_A2-like"/>
</dbReference>
<dbReference type="InterPro" id="IPR036952">
    <property type="entry name" value="VP1/VP2"/>
</dbReference>
<dbReference type="Pfam" id="PF00740">
    <property type="entry name" value="Parvo_coat"/>
    <property type="match status" value="1"/>
</dbReference>
<dbReference type="Pfam" id="PF08398">
    <property type="entry name" value="Phospholip_A2_4"/>
    <property type="match status" value="1"/>
</dbReference>
<dbReference type="SUPFAM" id="SSF88645">
    <property type="entry name" value="ssDNA viruses"/>
    <property type="match status" value="1"/>
</dbReference>
<protein>
    <recommendedName>
        <fullName>Capsid protein VP1</fullName>
    </recommendedName>
    <alternativeName>
        <fullName>Coat protein VP1</fullName>
    </alternativeName>
</protein>
<organism>
    <name type="scientific">Murine minute virus (strain MVMi)</name>
    <name type="common">MVM</name>
    <name type="synonym">Murine parvovirus</name>
    <dbReference type="NCBI Taxonomy" id="10795"/>
    <lineage>
        <taxon>Viruses</taxon>
        <taxon>Monodnaviria</taxon>
        <taxon>Shotokuvirae</taxon>
        <taxon>Cossaviricota</taxon>
        <taxon>Quintoviricetes</taxon>
        <taxon>Piccovirales</taxon>
        <taxon>Parvoviridae</taxon>
        <taxon>Parvovirinae</taxon>
        <taxon>Protoparvovirus</taxon>
        <taxon>Protoparvovirus rodent1</taxon>
    </lineage>
</organism>
<keyword id="KW-0002">3D-structure</keyword>
<keyword id="KW-0025">Alternative splicing</keyword>
<keyword id="KW-0167">Capsid protein</keyword>
<keyword id="KW-1165">Clathrin-mediated endocytosis of virus by host</keyword>
<keyword id="KW-1176">Cytoplasmic inwards viral transport</keyword>
<keyword id="KW-1048">Host nucleus</keyword>
<keyword id="KW-0945">Host-virus interaction</keyword>
<keyword id="KW-0460">Magnesium</keyword>
<keyword id="KW-0479">Metal-binding</keyword>
<keyword id="KW-1177">Microtubular inwards viral transport</keyword>
<keyword id="KW-1140">T=1 icosahedral capsid protein</keyword>
<keyword id="KW-1161">Viral attachment to host cell</keyword>
<keyword id="KW-1162">Viral penetration into host cytoplasm</keyword>
<keyword id="KW-1163">Viral penetration into host nucleus</keyword>
<keyword id="KW-1173">Viral penetration via permeabilization of host membrane</keyword>
<keyword id="KW-0946">Virion</keyword>
<keyword id="KW-1164">Virus endocytosis by host</keyword>
<keyword id="KW-1160">Virus entry into host cell</keyword>
<comment type="function">
    <text evidence="1">Capsid protein self-assembles to form an icosahedral capsid with a T=1 symmetry, about 22 nm in diameter, and consisting of 60 copies of two size variants of the capsid proteins, VP1 and VP2, which differ by the presence of an N-terminal extension in the minor protein VP1. The capsid encapsulates the genomic ssDNA. Capsid proteins are responsible for the attachment to host cell receptors. This attachment induces virion internalization predominantly through clathrin-dependent endocytosis. Binding to the host receptors also induces capsid rearrangements leading to surface exposure of VP1 N-terminus, specifically its phospholipase A2-like region and putative nuclear localization signal(s). VP1 N-terminus might serve as a lipolytic enzyme to breach the endosomal membrane during entry into host cell and might contribute to virus transport to the nucleus (By similarity).</text>
</comment>
<comment type="subcellular location">
    <subcellularLocation>
        <location evidence="1">Virion</location>
    </subcellularLocation>
    <subcellularLocation>
        <location evidence="4">Host nucleus</location>
    </subcellularLocation>
</comment>
<comment type="alternative products">
    <event type="alternative splicing"/>
    <isoform>
        <id>P07302-1</id>
        <name>VP1</name>
        <sequence type="displayed"/>
    </isoform>
    <isoform>
        <id>P07302-2</id>
        <name>VP2</name>
        <sequence type="described" ref="VSP_041134"/>
    </isoform>
</comment>
<comment type="domain">
    <text>The N-terminus of VP1 is sequestered within the mature capsid. It contains a phospholipase A2-like region and putative nuclear localization signals.</text>
</comment>
<comment type="miscellaneous">
    <text>The capsids of autonomous parvoviruses expose a proportion of VP2 N-terminus and part of that sequence can be cleaved of to form VP3.</text>
</comment>
<comment type="miscellaneous">
    <molecule>Isoform VP1</molecule>
    <text>Minor splicing isoform.</text>
</comment>
<comment type="miscellaneous">
    <molecule>Isoform VP2</molecule>
    <text evidence="4">Major splicing isoform (approximately 70% of the molecules), produced by deletion of the initiating AUG for VP1 and downstream translation of VP2.</text>
</comment>
<comment type="similarity">
    <text evidence="4">Belongs to the parvoviridae capsid protein family.</text>
</comment>
<comment type="sequence caution" evidence="4">
    <conflict type="erroneous gene model prediction">
        <sequence resource="EMBL-CDS" id="AAA69569"/>
    </conflict>
</comment>
<comment type="sequence caution" evidence="4">
    <conflict type="erroneous gene model prediction">
        <sequence resource="EMBL-CDS" id="CAB46507"/>
    </conflict>
</comment>
<comment type="sequence caution" evidence="4">
    <conflict type="erroneous initiation">
        <sequence resource="EMBL-CDS" id="CAB46508"/>
    </conflict>
    <text>Extended N-terminus.</text>
</comment>
<comment type="online information" name="Virus Particle ExploreR db">
    <link uri="https://viperdb.org/Info_Page.php?VDB=1mvm"/>
    <text>Icosahedral capsid structure</text>
</comment>